<dbReference type="EMBL" id="AL591983">
    <property type="protein sequence ID" value="CAD00694.1"/>
    <property type="molecule type" value="Genomic_DNA"/>
</dbReference>
<dbReference type="PIR" id="AH1401">
    <property type="entry name" value="AH1401"/>
</dbReference>
<dbReference type="RefSeq" id="NP_466139.1">
    <property type="nucleotide sequence ID" value="NC_003210.1"/>
</dbReference>
<dbReference type="RefSeq" id="WP_003739848.1">
    <property type="nucleotide sequence ID" value="NZ_CP149495.1"/>
</dbReference>
<dbReference type="PDB" id="7NHN">
    <property type="method" value="EM"/>
    <property type="resolution" value="2.90 A"/>
    <property type="chains" value="R=1-119"/>
</dbReference>
<dbReference type="PDB" id="8A57">
    <property type="method" value="EM"/>
    <property type="resolution" value="2.30 A"/>
    <property type="chains" value="R=1-119"/>
</dbReference>
<dbReference type="PDB" id="8A5I">
    <property type="method" value="EM"/>
    <property type="resolution" value="2.30 A"/>
    <property type="chains" value="R=1-119"/>
</dbReference>
<dbReference type="PDB" id="8A63">
    <property type="method" value="EM"/>
    <property type="resolution" value="3.10 A"/>
    <property type="chains" value="R=1-119"/>
</dbReference>
<dbReference type="PDBsum" id="7NHN"/>
<dbReference type="PDBsum" id="8A57"/>
<dbReference type="PDBsum" id="8A5I"/>
<dbReference type="PDBsum" id="8A63"/>
<dbReference type="EMDB" id="EMD-12334"/>
<dbReference type="EMDB" id="EMD-15161"/>
<dbReference type="EMDB" id="EMD-15175"/>
<dbReference type="EMDB" id="EMD-15204"/>
<dbReference type="SMR" id="Q8Y445"/>
<dbReference type="STRING" id="169963.gene:17595334"/>
<dbReference type="PaxDb" id="169963-lmo2616"/>
<dbReference type="EnsemblBacteria" id="CAD00694">
    <property type="protein sequence ID" value="CAD00694"/>
    <property type="gene ID" value="CAD00694"/>
</dbReference>
<dbReference type="GeneID" id="93240497"/>
<dbReference type="GeneID" id="987197"/>
<dbReference type="KEGG" id="lmo:lmo2616"/>
<dbReference type="PATRIC" id="fig|169963.11.peg.2680"/>
<dbReference type="eggNOG" id="COG0256">
    <property type="taxonomic scope" value="Bacteria"/>
</dbReference>
<dbReference type="HOGENOM" id="CLU_098841_0_1_9"/>
<dbReference type="OrthoDB" id="9810939at2"/>
<dbReference type="PhylomeDB" id="Q8Y445"/>
<dbReference type="BioCyc" id="LMON169963:LMO2616-MONOMER"/>
<dbReference type="Proteomes" id="UP000000817">
    <property type="component" value="Chromosome"/>
</dbReference>
<dbReference type="GO" id="GO:0022625">
    <property type="term" value="C:cytosolic large ribosomal subunit"/>
    <property type="evidence" value="ECO:0000318"/>
    <property type="project" value="GO_Central"/>
</dbReference>
<dbReference type="GO" id="GO:0008097">
    <property type="term" value="F:5S rRNA binding"/>
    <property type="evidence" value="ECO:0000318"/>
    <property type="project" value="GO_Central"/>
</dbReference>
<dbReference type="GO" id="GO:0003735">
    <property type="term" value="F:structural constituent of ribosome"/>
    <property type="evidence" value="ECO:0007669"/>
    <property type="project" value="InterPro"/>
</dbReference>
<dbReference type="GO" id="GO:0006412">
    <property type="term" value="P:translation"/>
    <property type="evidence" value="ECO:0007669"/>
    <property type="project" value="UniProtKB-UniRule"/>
</dbReference>
<dbReference type="CDD" id="cd00432">
    <property type="entry name" value="Ribosomal_L18_L5e"/>
    <property type="match status" value="1"/>
</dbReference>
<dbReference type="FunFam" id="3.30.420.100:FF:000001">
    <property type="entry name" value="50S ribosomal protein L18"/>
    <property type="match status" value="1"/>
</dbReference>
<dbReference type="Gene3D" id="3.30.420.100">
    <property type="match status" value="1"/>
</dbReference>
<dbReference type="HAMAP" id="MF_01337_B">
    <property type="entry name" value="Ribosomal_uL18_B"/>
    <property type="match status" value="1"/>
</dbReference>
<dbReference type="InterPro" id="IPR004389">
    <property type="entry name" value="Ribosomal_uL18_bac-type"/>
</dbReference>
<dbReference type="InterPro" id="IPR005484">
    <property type="entry name" value="Ribosomal_uL18_bac/euk"/>
</dbReference>
<dbReference type="NCBIfam" id="TIGR00060">
    <property type="entry name" value="L18_bact"/>
    <property type="match status" value="1"/>
</dbReference>
<dbReference type="PANTHER" id="PTHR12899">
    <property type="entry name" value="39S RIBOSOMAL PROTEIN L18, MITOCHONDRIAL"/>
    <property type="match status" value="1"/>
</dbReference>
<dbReference type="PANTHER" id="PTHR12899:SF3">
    <property type="entry name" value="LARGE RIBOSOMAL SUBUNIT PROTEIN UL18M"/>
    <property type="match status" value="1"/>
</dbReference>
<dbReference type="Pfam" id="PF00861">
    <property type="entry name" value="Ribosomal_L18p"/>
    <property type="match status" value="1"/>
</dbReference>
<dbReference type="SUPFAM" id="SSF53137">
    <property type="entry name" value="Translational machinery components"/>
    <property type="match status" value="1"/>
</dbReference>
<reference key="1">
    <citation type="journal article" date="2001" name="Science">
        <title>Comparative genomics of Listeria species.</title>
        <authorList>
            <person name="Glaser P."/>
            <person name="Frangeul L."/>
            <person name="Buchrieser C."/>
            <person name="Rusniok C."/>
            <person name="Amend A."/>
            <person name="Baquero F."/>
            <person name="Berche P."/>
            <person name="Bloecker H."/>
            <person name="Brandt P."/>
            <person name="Chakraborty T."/>
            <person name="Charbit A."/>
            <person name="Chetouani F."/>
            <person name="Couve E."/>
            <person name="de Daruvar A."/>
            <person name="Dehoux P."/>
            <person name="Domann E."/>
            <person name="Dominguez-Bernal G."/>
            <person name="Duchaud E."/>
            <person name="Durant L."/>
            <person name="Dussurget O."/>
            <person name="Entian K.-D."/>
            <person name="Fsihi H."/>
            <person name="Garcia-del Portillo F."/>
            <person name="Garrido P."/>
            <person name="Gautier L."/>
            <person name="Goebel W."/>
            <person name="Gomez-Lopez N."/>
            <person name="Hain T."/>
            <person name="Hauf J."/>
            <person name="Jackson D."/>
            <person name="Jones L.-M."/>
            <person name="Kaerst U."/>
            <person name="Kreft J."/>
            <person name="Kuhn M."/>
            <person name="Kunst F."/>
            <person name="Kurapkat G."/>
            <person name="Madueno E."/>
            <person name="Maitournam A."/>
            <person name="Mata Vicente J."/>
            <person name="Ng E."/>
            <person name="Nedjari H."/>
            <person name="Nordsiek G."/>
            <person name="Novella S."/>
            <person name="de Pablos B."/>
            <person name="Perez-Diaz J.-C."/>
            <person name="Purcell R."/>
            <person name="Remmel B."/>
            <person name="Rose M."/>
            <person name="Schlueter T."/>
            <person name="Simoes N."/>
            <person name="Tierrez A."/>
            <person name="Vazquez-Boland J.-A."/>
            <person name="Voss H."/>
            <person name="Wehland J."/>
            <person name="Cossart P."/>
        </authorList>
    </citation>
    <scope>NUCLEOTIDE SEQUENCE [LARGE SCALE GENOMIC DNA]</scope>
    <source>
        <strain>ATCC BAA-679 / EGD-e</strain>
    </source>
</reference>
<comment type="function">
    <text evidence="1">This is one of the proteins that bind and probably mediate the attachment of the 5S RNA into the large ribosomal subunit, where it forms part of the central protuberance.</text>
</comment>
<comment type="subunit">
    <text evidence="1">Part of the 50S ribosomal subunit; part of the 5S rRNA/L5/L18/L25 subcomplex. Contacts the 5S and 23S rRNAs.</text>
</comment>
<comment type="similarity">
    <text evidence="1">Belongs to the universal ribosomal protein uL18 family.</text>
</comment>
<evidence type="ECO:0000255" key="1">
    <source>
        <dbReference type="HAMAP-Rule" id="MF_01337"/>
    </source>
</evidence>
<evidence type="ECO:0000256" key="2">
    <source>
        <dbReference type="SAM" id="MobiDB-lite"/>
    </source>
</evidence>
<evidence type="ECO:0000305" key="3"/>
<evidence type="ECO:0007829" key="4">
    <source>
        <dbReference type="PDB" id="8A57"/>
    </source>
</evidence>
<sequence length="119" mass="13096">MITKIDKNKVRKKRHARVRSKISGTESRPRLNVFRSNKNIYAQIIDDVNGVTLASASNLDKDFGSAESKVDAASKVGELVAKRASEKGITSVTFDRGGYLYHGRVKALAEAARENGLEF</sequence>
<name>RL18_LISMO</name>
<organism>
    <name type="scientific">Listeria monocytogenes serovar 1/2a (strain ATCC BAA-679 / EGD-e)</name>
    <dbReference type="NCBI Taxonomy" id="169963"/>
    <lineage>
        <taxon>Bacteria</taxon>
        <taxon>Bacillati</taxon>
        <taxon>Bacillota</taxon>
        <taxon>Bacilli</taxon>
        <taxon>Bacillales</taxon>
        <taxon>Listeriaceae</taxon>
        <taxon>Listeria</taxon>
    </lineage>
</organism>
<proteinExistence type="evidence at protein level"/>
<accession>Q8Y445</accession>
<protein>
    <recommendedName>
        <fullName evidence="1">Large ribosomal subunit protein uL18</fullName>
    </recommendedName>
    <alternativeName>
        <fullName evidence="3">50S ribosomal protein L18</fullName>
    </alternativeName>
</protein>
<keyword id="KW-0002">3D-structure</keyword>
<keyword id="KW-1185">Reference proteome</keyword>
<keyword id="KW-0687">Ribonucleoprotein</keyword>
<keyword id="KW-0689">Ribosomal protein</keyword>
<keyword id="KW-0694">RNA-binding</keyword>
<keyword id="KW-0699">rRNA-binding</keyword>
<feature type="chain" id="PRO_0000131289" description="Large ribosomal subunit protein uL18">
    <location>
        <begin position="1"/>
        <end position="119"/>
    </location>
</feature>
<feature type="region of interest" description="Disordered" evidence="2">
    <location>
        <begin position="1"/>
        <end position="25"/>
    </location>
</feature>
<feature type="compositionally biased region" description="Basic residues" evidence="2">
    <location>
        <begin position="9"/>
        <end position="20"/>
    </location>
</feature>
<feature type="helix" evidence="4">
    <location>
        <begin position="7"/>
        <end position="19"/>
    </location>
</feature>
<feature type="strand" evidence="4">
    <location>
        <begin position="26"/>
        <end position="28"/>
    </location>
</feature>
<feature type="strand" evidence="4">
    <location>
        <begin position="30"/>
        <end position="35"/>
    </location>
</feature>
<feature type="strand" evidence="4">
    <location>
        <begin position="40"/>
        <end position="46"/>
    </location>
</feature>
<feature type="turn" evidence="4">
    <location>
        <begin position="47"/>
        <end position="50"/>
    </location>
</feature>
<feature type="strand" evidence="4">
    <location>
        <begin position="51"/>
        <end position="59"/>
    </location>
</feature>
<feature type="strand" evidence="4">
    <location>
        <begin position="61"/>
        <end position="63"/>
    </location>
</feature>
<feature type="helix" evidence="4">
    <location>
        <begin position="69"/>
        <end position="87"/>
    </location>
</feature>
<feature type="strand" evidence="4">
    <location>
        <begin position="93"/>
        <end position="95"/>
    </location>
</feature>
<feature type="strand" evidence="4">
    <location>
        <begin position="101"/>
        <end position="103"/>
    </location>
</feature>
<feature type="helix" evidence="4">
    <location>
        <begin position="104"/>
        <end position="114"/>
    </location>
</feature>
<gene>
    <name evidence="1" type="primary">rplR</name>
    <name type="ordered locus">lmo2616</name>
</gene>